<keyword id="KW-0694">RNA-binding</keyword>
<keyword id="KW-0346">Stress response</keyword>
<feature type="chain" id="PRO_1000025938" description="RNA-binding protein Hfq">
    <location>
        <begin position="1"/>
        <end position="90"/>
    </location>
</feature>
<feature type="domain" description="Sm" evidence="2">
    <location>
        <begin position="9"/>
        <end position="68"/>
    </location>
</feature>
<feature type="region of interest" description="Disordered" evidence="3">
    <location>
        <begin position="71"/>
        <end position="90"/>
    </location>
</feature>
<sequence length="90" mass="9897">MAKGQSLQDPFLNALRRERVPVSIYLVNGIKLQGQVESFDQFVILLKNTVSQMVYKHAISTVVPARPFNVTGHQNAQGGYGPQDDVPSGE</sequence>
<organism>
    <name type="scientific">Shewanella sp. (strain W3-18-1)</name>
    <dbReference type="NCBI Taxonomy" id="351745"/>
    <lineage>
        <taxon>Bacteria</taxon>
        <taxon>Pseudomonadati</taxon>
        <taxon>Pseudomonadota</taxon>
        <taxon>Gammaproteobacteria</taxon>
        <taxon>Alteromonadales</taxon>
        <taxon>Shewanellaceae</taxon>
        <taxon>Shewanella</taxon>
    </lineage>
</organism>
<reference key="1">
    <citation type="submission" date="2006-12" db="EMBL/GenBank/DDBJ databases">
        <title>Complete sequence of Shewanella sp. W3-18-1.</title>
        <authorList>
            <consortium name="US DOE Joint Genome Institute"/>
            <person name="Copeland A."/>
            <person name="Lucas S."/>
            <person name="Lapidus A."/>
            <person name="Barry K."/>
            <person name="Detter J.C."/>
            <person name="Glavina del Rio T."/>
            <person name="Hammon N."/>
            <person name="Israni S."/>
            <person name="Dalin E."/>
            <person name="Tice H."/>
            <person name="Pitluck S."/>
            <person name="Chain P."/>
            <person name="Malfatti S."/>
            <person name="Shin M."/>
            <person name="Vergez L."/>
            <person name="Schmutz J."/>
            <person name="Larimer F."/>
            <person name="Land M."/>
            <person name="Hauser L."/>
            <person name="Kyrpides N."/>
            <person name="Lykidis A."/>
            <person name="Tiedje J."/>
            <person name="Richardson P."/>
        </authorList>
    </citation>
    <scope>NUCLEOTIDE SEQUENCE [LARGE SCALE GENOMIC DNA]</scope>
    <source>
        <strain>W3-18-1</strain>
    </source>
</reference>
<comment type="function">
    <text evidence="1">RNA chaperone that binds small regulatory RNA (sRNAs) and mRNAs to facilitate mRNA translational regulation in response to envelope stress, environmental stress and changes in metabolite concentrations. Also binds with high specificity to tRNAs.</text>
</comment>
<comment type="subunit">
    <text evidence="1">Homohexamer.</text>
</comment>
<comment type="similarity">
    <text evidence="1">Belongs to the Hfq family.</text>
</comment>
<name>HFQ_SHESW</name>
<accession>A1RFR7</accession>
<dbReference type="EMBL" id="CP000503">
    <property type="protein sequence ID" value="ABM23512.1"/>
    <property type="molecule type" value="Genomic_DNA"/>
</dbReference>
<dbReference type="RefSeq" id="WP_011788042.1">
    <property type="nucleotide sequence ID" value="NC_008750.1"/>
</dbReference>
<dbReference type="SMR" id="A1RFR7"/>
<dbReference type="GeneID" id="67444858"/>
<dbReference type="KEGG" id="shw:Sputw3181_0661"/>
<dbReference type="HOGENOM" id="CLU_113688_2_2_6"/>
<dbReference type="Proteomes" id="UP000002597">
    <property type="component" value="Chromosome"/>
</dbReference>
<dbReference type="GO" id="GO:0005829">
    <property type="term" value="C:cytosol"/>
    <property type="evidence" value="ECO:0007669"/>
    <property type="project" value="TreeGrafter"/>
</dbReference>
<dbReference type="GO" id="GO:0003723">
    <property type="term" value="F:RNA binding"/>
    <property type="evidence" value="ECO:0007669"/>
    <property type="project" value="UniProtKB-UniRule"/>
</dbReference>
<dbReference type="GO" id="GO:0006355">
    <property type="term" value="P:regulation of DNA-templated transcription"/>
    <property type="evidence" value="ECO:0007669"/>
    <property type="project" value="InterPro"/>
</dbReference>
<dbReference type="GO" id="GO:0043487">
    <property type="term" value="P:regulation of RNA stability"/>
    <property type="evidence" value="ECO:0007669"/>
    <property type="project" value="TreeGrafter"/>
</dbReference>
<dbReference type="GO" id="GO:0045974">
    <property type="term" value="P:regulation of translation, ncRNA-mediated"/>
    <property type="evidence" value="ECO:0007669"/>
    <property type="project" value="TreeGrafter"/>
</dbReference>
<dbReference type="CDD" id="cd01716">
    <property type="entry name" value="Hfq"/>
    <property type="match status" value="1"/>
</dbReference>
<dbReference type="FunFam" id="2.30.30.100:FF:000001">
    <property type="entry name" value="RNA-binding protein Hfq"/>
    <property type="match status" value="1"/>
</dbReference>
<dbReference type="Gene3D" id="2.30.30.100">
    <property type="match status" value="1"/>
</dbReference>
<dbReference type="HAMAP" id="MF_00436">
    <property type="entry name" value="Hfq"/>
    <property type="match status" value="1"/>
</dbReference>
<dbReference type="InterPro" id="IPR005001">
    <property type="entry name" value="Hfq"/>
</dbReference>
<dbReference type="InterPro" id="IPR010920">
    <property type="entry name" value="LSM_dom_sf"/>
</dbReference>
<dbReference type="InterPro" id="IPR047575">
    <property type="entry name" value="Sm"/>
</dbReference>
<dbReference type="NCBIfam" id="TIGR02383">
    <property type="entry name" value="Hfq"/>
    <property type="match status" value="1"/>
</dbReference>
<dbReference type="NCBIfam" id="NF001602">
    <property type="entry name" value="PRK00395.1"/>
    <property type="match status" value="1"/>
</dbReference>
<dbReference type="PANTHER" id="PTHR34772">
    <property type="entry name" value="RNA-BINDING PROTEIN HFQ"/>
    <property type="match status" value="1"/>
</dbReference>
<dbReference type="PANTHER" id="PTHR34772:SF1">
    <property type="entry name" value="RNA-BINDING PROTEIN HFQ"/>
    <property type="match status" value="1"/>
</dbReference>
<dbReference type="Pfam" id="PF17209">
    <property type="entry name" value="Hfq"/>
    <property type="match status" value="1"/>
</dbReference>
<dbReference type="SUPFAM" id="SSF50182">
    <property type="entry name" value="Sm-like ribonucleoproteins"/>
    <property type="match status" value="1"/>
</dbReference>
<dbReference type="PROSITE" id="PS52002">
    <property type="entry name" value="SM"/>
    <property type="match status" value="1"/>
</dbReference>
<gene>
    <name evidence="1" type="primary">hfq</name>
    <name type="ordered locus">Sputw3181_0661</name>
</gene>
<proteinExistence type="inferred from homology"/>
<evidence type="ECO:0000255" key="1">
    <source>
        <dbReference type="HAMAP-Rule" id="MF_00436"/>
    </source>
</evidence>
<evidence type="ECO:0000255" key="2">
    <source>
        <dbReference type="PROSITE-ProRule" id="PRU01346"/>
    </source>
</evidence>
<evidence type="ECO:0000256" key="3">
    <source>
        <dbReference type="SAM" id="MobiDB-lite"/>
    </source>
</evidence>
<protein>
    <recommendedName>
        <fullName evidence="1">RNA-binding protein Hfq</fullName>
    </recommendedName>
</protein>